<keyword id="KW-0067">ATP-binding</keyword>
<keyword id="KW-0963">Cytoplasm</keyword>
<keyword id="KW-0315">Glutamine amidotransferase</keyword>
<keyword id="KW-0436">Ligase</keyword>
<keyword id="KW-0547">Nucleotide-binding</keyword>
<keyword id="KW-0665">Pyrimidine biosynthesis</keyword>
<proteinExistence type="inferred from homology"/>
<comment type="function">
    <text evidence="1">Catalyzes the ATP-dependent amination of UTP to CTP with either L-glutamine or ammonia as the source of nitrogen. Plays an important role in the regulation of phospholipid synthesis (By similarity).</text>
</comment>
<comment type="catalytic activity">
    <reaction>
        <text>UTP + L-glutamine + ATP + H2O = CTP + L-glutamate + ADP + phosphate + 2 H(+)</text>
        <dbReference type="Rhea" id="RHEA:26426"/>
        <dbReference type="ChEBI" id="CHEBI:15377"/>
        <dbReference type="ChEBI" id="CHEBI:15378"/>
        <dbReference type="ChEBI" id="CHEBI:29985"/>
        <dbReference type="ChEBI" id="CHEBI:30616"/>
        <dbReference type="ChEBI" id="CHEBI:37563"/>
        <dbReference type="ChEBI" id="CHEBI:43474"/>
        <dbReference type="ChEBI" id="CHEBI:46398"/>
        <dbReference type="ChEBI" id="CHEBI:58359"/>
        <dbReference type="ChEBI" id="CHEBI:456216"/>
        <dbReference type="EC" id="6.3.4.2"/>
    </reaction>
</comment>
<comment type="cofactor">
    <cofactor evidence="1">
        <name>Mg(2+)</name>
        <dbReference type="ChEBI" id="CHEBI:18420"/>
    </cofactor>
</comment>
<comment type="activity regulation">
    <text evidence="1">Activated by GTP. Subject to allosteric product inhibition by CTP. Inhibited by p-chloromercuriphenylsulfonic acid, N-ethylmaleimide and cyclopentenylcytosine (CPEC) (By similarity).</text>
</comment>
<comment type="pathway">
    <text>Pyrimidine metabolism; CTP biosynthesis via de novo pathway; CTP from UDP: step 2/2.</text>
</comment>
<comment type="subunit">
    <text evidence="1">Homodimer. Oligomerizes to a tetramer in the presence of its substrates UTP and ATP (By similarity).</text>
</comment>
<comment type="subcellular location">
    <subcellularLocation>
        <location evidence="1">Cytoplasm</location>
    </subcellularLocation>
</comment>
<comment type="similarity">
    <text evidence="3">Belongs to the CTP synthase family.</text>
</comment>
<dbReference type="EC" id="6.3.4.2"/>
<dbReference type="EMBL" id="AAFW02000040">
    <property type="protein sequence ID" value="EDN63419.1"/>
    <property type="molecule type" value="Genomic_DNA"/>
</dbReference>
<dbReference type="SMR" id="A6ZQ59"/>
<dbReference type="HOGENOM" id="CLU_011675_5_0_1"/>
<dbReference type="UniPathway" id="UPA00159">
    <property type="reaction ID" value="UER00277"/>
</dbReference>
<dbReference type="Proteomes" id="UP000007060">
    <property type="component" value="Unassembled WGS sequence"/>
</dbReference>
<dbReference type="GO" id="GO:0097268">
    <property type="term" value="C:cytoophidium"/>
    <property type="evidence" value="ECO:0007669"/>
    <property type="project" value="TreeGrafter"/>
</dbReference>
<dbReference type="GO" id="GO:0005737">
    <property type="term" value="C:cytoplasm"/>
    <property type="evidence" value="ECO:0007669"/>
    <property type="project" value="UniProtKB-SubCell"/>
</dbReference>
<dbReference type="GO" id="GO:0005524">
    <property type="term" value="F:ATP binding"/>
    <property type="evidence" value="ECO:0007669"/>
    <property type="project" value="UniProtKB-KW"/>
</dbReference>
<dbReference type="GO" id="GO:0003883">
    <property type="term" value="F:CTP synthase activity"/>
    <property type="evidence" value="ECO:0007669"/>
    <property type="project" value="UniProtKB-EC"/>
</dbReference>
<dbReference type="GO" id="GO:0042802">
    <property type="term" value="F:identical protein binding"/>
    <property type="evidence" value="ECO:0007669"/>
    <property type="project" value="TreeGrafter"/>
</dbReference>
<dbReference type="GO" id="GO:0044210">
    <property type="term" value="P:'de novo' CTP biosynthetic process"/>
    <property type="evidence" value="ECO:0007669"/>
    <property type="project" value="UniProtKB-UniPathway"/>
</dbReference>
<dbReference type="GO" id="GO:0019856">
    <property type="term" value="P:pyrimidine nucleobase biosynthetic process"/>
    <property type="evidence" value="ECO:0007669"/>
    <property type="project" value="TreeGrafter"/>
</dbReference>
<dbReference type="CDD" id="cd03113">
    <property type="entry name" value="CTPS_N"/>
    <property type="match status" value="1"/>
</dbReference>
<dbReference type="CDD" id="cd01746">
    <property type="entry name" value="GATase1_CTP_Synthase"/>
    <property type="match status" value="1"/>
</dbReference>
<dbReference type="FunFam" id="3.40.50.300:FF:000207">
    <property type="entry name" value="CTP synthase"/>
    <property type="match status" value="1"/>
</dbReference>
<dbReference type="FunFam" id="3.40.50.880:FF:000005">
    <property type="entry name" value="CTP synthase"/>
    <property type="match status" value="1"/>
</dbReference>
<dbReference type="Gene3D" id="3.40.50.880">
    <property type="match status" value="1"/>
</dbReference>
<dbReference type="Gene3D" id="3.40.50.300">
    <property type="entry name" value="P-loop containing nucleotide triphosphate hydrolases"/>
    <property type="match status" value="1"/>
</dbReference>
<dbReference type="InterPro" id="IPR029062">
    <property type="entry name" value="Class_I_gatase-like"/>
</dbReference>
<dbReference type="InterPro" id="IPR004468">
    <property type="entry name" value="CTP_synthase"/>
</dbReference>
<dbReference type="InterPro" id="IPR017456">
    <property type="entry name" value="CTP_synthase_N"/>
</dbReference>
<dbReference type="InterPro" id="IPR017926">
    <property type="entry name" value="GATASE"/>
</dbReference>
<dbReference type="InterPro" id="IPR033828">
    <property type="entry name" value="GATase1_CTP_Synthase"/>
</dbReference>
<dbReference type="InterPro" id="IPR027417">
    <property type="entry name" value="P-loop_NTPase"/>
</dbReference>
<dbReference type="NCBIfam" id="NF003792">
    <property type="entry name" value="PRK05380.1"/>
    <property type="match status" value="1"/>
</dbReference>
<dbReference type="NCBIfam" id="TIGR00337">
    <property type="entry name" value="PyrG"/>
    <property type="match status" value="1"/>
</dbReference>
<dbReference type="PANTHER" id="PTHR11550">
    <property type="entry name" value="CTP SYNTHASE"/>
    <property type="match status" value="1"/>
</dbReference>
<dbReference type="PANTHER" id="PTHR11550:SF0">
    <property type="entry name" value="CTP SYNTHASE-RELATED"/>
    <property type="match status" value="1"/>
</dbReference>
<dbReference type="Pfam" id="PF06418">
    <property type="entry name" value="CTP_synth_N"/>
    <property type="match status" value="1"/>
</dbReference>
<dbReference type="Pfam" id="PF00117">
    <property type="entry name" value="GATase"/>
    <property type="match status" value="1"/>
</dbReference>
<dbReference type="SUPFAM" id="SSF52317">
    <property type="entry name" value="Class I glutamine amidotransferase-like"/>
    <property type="match status" value="1"/>
</dbReference>
<dbReference type="SUPFAM" id="SSF52540">
    <property type="entry name" value="P-loop containing nucleoside triphosphate hydrolases"/>
    <property type="match status" value="1"/>
</dbReference>
<dbReference type="PROSITE" id="PS51273">
    <property type="entry name" value="GATASE_TYPE_1"/>
    <property type="match status" value="1"/>
</dbReference>
<sequence length="578" mass="64497">MKYVVVSGGVISGIGKGVLASSTGMLLKTLGLKVTSIKIDPYMNIDAGTMSPLEHGECFVLDDGGETDLDLGNYERYLGITLSRDHNITTGKIYSHVISRERRGDYLGKTVQIVPHLTNAIQDWIQRVSKIPVDDTGLEPDVCIIELGGTVGDIESAPFVEALRQFQFEVGRENFALIHVSLVPVIHGEQKTKPTQAAIKDLRSLGLIPDMIACRCSEELNRSTIDKIAMFCHVGPEQVVNVHDVNSTYHVPLLLLKQHMIDYLHSRLKLGEVPLTLEDKERGSQLLTNWENMTKNLDDSDDVVKIALVGKYTNLKDSYLSVTKSLEHASMKCRRQLEILWVEASNLEPETQEVDKNKFHDSWNKLSSADGILVPGGFGTRGIEGMILAAKWARESGVPFLGVCLGLQVAAIEFARNVIGRPNSSSTEFLDETLLAPEDQVVIYMPEIDKEHMGGTMRLGLRPTIFQPNSEWSNIRKLYGEVNEVHERHRHRYEINPKIVNDMESRGFIFVGKDETGQRCEIFELKGHPYYVGTQYHPEYTSKVLEPSRPFWGLVAAASGTLGDVIKDINLSEGNENE</sequence>
<feature type="chain" id="PRO_0000377746" description="CTP synthase 2">
    <location>
        <begin position="1"/>
        <end position="578"/>
    </location>
</feature>
<feature type="domain" description="Glutamine amidotransferase type-1" evidence="2">
    <location>
        <begin position="305"/>
        <end position="564"/>
    </location>
</feature>
<feature type="active site" description="For GATase activity" evidence="2">
    <location>
        <position position="404"/>
    </location>
</feature>
<feature type="active site" description="For GATase activity" evidence="2">
    <location>
        <position position="537"/>
    </location>
</feature>
<feature type="active site" description="For GATase activity" evidence="2">
    <location>
        <position position="539"/>
    </location>
</feature>
<name>URA8_YEAS7</name>
<reference key="1">
    <citation type="journal article" date="2007" name="Proc. Natl. Acad. Sci. U.S.A.">
        <title>Genome sequencing and comparative analysis of Saccharomyces cerevisiae strain YJM789.</title>
        <authorList>
            <person name="Wei W."/>
            <person name="McCusker J.H."/>
            <person name="Hyman R.W."/>
            <person name="Jones T."/>
            <person name="Ning Y."/>
            <person name="Cao Z."/>
            <person name="Gu Z."/>
            <person name="Bruno D."/>
            <person name="Miranda M."/>
            <person name="Nguyen M."/>
            <person name="Wilhelmy J."/>
            <person name="Komp C."/>
            <person name="Tamse R."/>
            <person name="Wang X."/>
            <person name="Jia P."/>
            <person name="Luedi P."/>
            <person name="Oefner P.J."/>
            <person name="David L."/>
            <person name="Dietrich F.S."/>
            <person name="Li Y."/>
            <person name="Davis R.W."/>
            <person name="Steinmetz L.M."/>
        </authorList>
    </citation>
    <scope>NUCLEOTIDE SEQUENCE [LARGE SCALE GENOMIC DNA]</scope>
    <source>
        <strain>YJM789</strain>
    </source>
</reference>
<gene>
    <name type="primary">URA8</name>
    <name type="ORF">SCY_3020</name>
</gene>
<protein>
    <recommendedName>
        <fullName>CTP synthase 2</fullName>
        <ecNumber>6.3.4.2</ecNumber>
    </recommendedName>
    <alternativeName>
        <fullName>CTP synthetase 2</fullName>
    </alternativeName>
    <alternativeName>
        <fullName>UTP--ammonia ligase 2</fullName>
    </alternativeName>
</protein>
<organism>
    <name type="scientific">Saccharomyces cerevisiae (strain YJM789)</name>
    <name type="common">Baker's yeast</name>
    <dbReference type="NCBI Taxonomy" id="307796"/>
    <lineage>
        <taxon>Eukaryota</taxon>
        <taxon>Fungi</taxon>
        <taxon>Dikarya</taxon>
        <taxon>Ascomycota</taxon>
        <taxon>Saccharomycotina</taxon>
        <taxon>Saccharomycetes</taxon>
        <taxon>Saccharomycetales</taxon>
        <taxon>Saccharomycetaceae</taxon>
        <taxon>Saccharomyces</taxon>
    </lineage>
</organism>
<accession>A6ZQ59</accession>
<evidence type="ECO:0000250" key="1"/>
<evidence type="ECO:0000255" key="2">
    <source>
        <dbReference type="PROSITE-ProRule" id="PRU00605"/>
    </source>
</evidence>
<evidence type="ECO:0000305" key="3"/>